<proteinExistence type="inferred from homology"/>
<protein>
    <recommendedName>
        <fullName>Surface presentation of antigens protein SpaQ</fullName>
    </recommendedName>
</protein>
<feature type="chain" id="PRO_0000129105" description="Surface presentation of antigens protein SpaQ">
    <location>
        <begin position="1"/>
        <end position="86"/>
    </location>
</feature>
<feature type="transmembrane region" description="Helical" evidence="1">
    <location>
        <begin position="16"/>
        <end position="36"/>
    </location>
</feature>
<feature type="transmembrane region" description="Helical" evidence="1">
    <location>
        <begin position="53"/>
        <end position="73"/>
    </location>
</feature>
<keyword id="KW-1003">Cell membrane</keyword>
<keyword id="KW-0472">Membrane</keyword>
<keyword id="KW-0812">Transmembrane</keyword>
<keyword id="KW-1133">Transmembrane helix</keyword>
<keyword id="KW-0843">Virulence</keyword>
<evidence type="ECO:0000255" key="1"/>
<evidence type="ECO:0000305" key="2"/>
<accession>P0A1M1</accession>
<accession>P40704</accession>
<accession>Q54011</accession>
<accession>Q54013</accession>
<accession>Q57117</accession>
<accession>Q57533</accession>
<gene>
    <name type="primary">spaQ</name>
</gene>
<reference key="1">
    <citation type="journal article" date="1995" name="Proc. Natl. Acad. Sci. U.S.A.">
        <title>Relationship between evolutionary rate and cellular location among the Inv/Spa invasion proteins of Salmonella enterica.</title>
        <authorList>
            <person name="Li J."/>
            <person name="Ochman H."/>
            <person name="Groisman E.A."/>
            <person name="Boyd E.F."/>
            <person name="Solomon F."/>
            <person name="Nelson K."/>
            <person name="Selander R.K."/>
        </authorList>
    </citation>
    <scope>NUCLEOTIDE SEQUENCE [GENOMIC DNA]</scope>
    <source>
        <strain>s2962</strain>
    </source>
</reference>
<name>SPAQ_SALGL</name>
<comment type="function">
    <text>Involved in a secretory pathway responsible for the surface presentation of determinants needed for the entry of Salmonella species into mammalian cells.</text>
</comment>
<comment type="subcellular location">
    <subcellularLocation>
        <location evidence="2">Cell membrane</location>
        <topology evidence="2">Multi-pass membrane protein</topology>
    </subcellularLocation>
</comment>
<comment type="similarity">
    <text evidence="2">Belongs to the FliQ/MopD/SpaQ family.</text>
</comment>
<sequence length="86" mass="9359">MDDLVFAGNKALYLVLILSGWPTIVATIIGLLVGLFQTVTQLQEQTLPFGIKLLGVCLCLFLLSGWYGEVLLSYGRQVIFLALAKG</sequence>
<dbReference type="EMBL" id="U29347">
    <property type="protein sequence ID" value="AAC43964.1"/>
    <property type="molecule type" value="Genomic_DNA"/>
</dbReference>
<dbReference type="RefSeq" id="WP_000342503.1">
    <property type="nucleotide sequence ID" value="NZ_RHEL01000007.1"/>
</dbReference>
<dbReference type="SMR" id="P0A1M1"/>
<dbReference type="PATRIC" id="fig|594.9.peg.217"/>
<dbReference type="OMA" id="GWYGETL"/>
<dbReference type="GO" id="GO:0005886">
    <property type="term" value="C:plasma membrane"/>
    <property type="evidence" value="ECO:0007669"/>
    <property type="project" value="UniProtKB-SubCell"/>
</dbReference>
<dbReference type="GO" id="GO:0009306">
    <property type="term" value="P:protein secretion"/>
    <property type="evidence" value="ECO:0007669"/>
    <property type="project" value="InterPro"/>
</dbReference>
<dbReference type="InterPro" id="IPR002191">
    <property type="entry name" value="Bac_export_3"/>
</dbReference>
<dbReference type="InterPro" id="IPR006306">
    <property type="entry name" value="T3SS_HrpO"/>
</dbReference>
<dbReference type="NCBIfam" id="TIGR01403">
    <property type="entry name" value="fliQ_rel_III"/>
    <property type="match status" value="1"/>
</dbReference>
<dbReference type="NCBIfam" id="NF011861">
    <property type="entry name" value="PRK15333.1"/>
    <property type="match status" value="1"/>
</dbReference>
<dbReference type="PANTHER" id="PTHR34040">
    <property type="entry name" value="FLAGELLAR BIOSYNTHETIC PROTEIN FLIQ"/>
    <property type="match status" value="1"/>
</dbReference>
<dbReference type="PANTHER" id="PTHR34040:SF7">
    <property type="entry name" value="SURFACE PRESENTATION OF ANTIGENS PROTEIN SPAQ"/>
    <property type="match status" value="1"/>
</dbReference>
<dbReference type="Pfam" id="PF01313">
    <property type="entry name" value="Bac_export_3"/>
    <property type="match status" value="1"/>
</dbReference>
<dbReference type="PRINTS" id="PR00952">
    <property type="entry name" value="TYPE3IMQPROT"/>
</dbReference>
<organism>
    <name type="scientific">Salmonella gallinarum</name>
    <dbReference type="NCBI Taxonomy" id="594"/>
    <lineage>
        <taxon>Bacteria</taxon>
        <taxon>Pseudomonadati</taxon>
        <taxon>Pseudomonadota</taxon>
        <taxon>Gammaproteobacteria</taxon>
        <taxon>Enterobacterales</taxon>
        <taxon>Enterobacteriaceae</taxon>
        <taxon>Salmonella</taxon>
    </lineage>
</organism>